<protein>
    <recommendedName>
        <fullName evidence="1">Large ribosomal subunit protein uL2</fullName>
    </recommendedName>
    <alternativeName>
        <fullName evidence="3">50S ribosomal protein L2</fullName>
    </alternativeName>
</protein>
<organism>
    <name type="scientific">Clostridium botulinum (strain Okra / Type B1)</name>
    <dbReference type="NCBI Taxonomy" id="498213"/>
    <lineage>
        <taxon>Bacteria</taxon>
        <taxon>Bacillati</taxon>
        <taxon>Bacillota</taxon>
        <taxon>Clostridia</taxon>
        <taxon>Eubacteriales</taxon>
        <taxon>Clostridiaceae</taxon>
        <taxon>Clostridium</taxon>
    </lineage>
</organism>
<keyword id="KW-0687">Ribonucleoprotein</keyword>
<keyword id="KW-0689">Ribosomal protein</keyword>
<keyword id="KW-0694">RNA-binding</keyword>
<keyword id="KW-0699">rRNA-binding</keyword>
<name>RL2_CLOBK</name>
<evidence type="ECO:0000255" key="1">
    <source>
        <dbReference type="HAMAP-Rule" id="MF_01320"/>
    </source>
</evidence>
<evidence type="ECO:0000256" key="2">
    <source>
        <dbReference type="SAM" id="MobiDB-lite"/>
    </source>
</evidence>
<evidence type="ECO:0000305" key="3"/>
<feature type="chain" id="PRO_1000141529" description="Large ribosomal subunit protein uL2">
    <location>
        <begin position="1"/>
        <end position="277"/>
    </location>
</feature>
<feature type="region of interest" description="Disordered" evidence="2">
    <location>
        <begin position="219"/>
        <end position="277"/>
    </location>
</feature>
<gene>
    <name evidence="1" type="primary">rplB</name>
    <name type="ordered locus">CLD_1027</name>
</gene>
<comment type="function">
    <text evidence="1">One of the primary rRNA binding proteins. Required for association of the 30S and 50S subunits to form the 70S ribosome, for tRNA binding and peptide bond formation. It has been suggested to have peptidyltransferase activity; this is somewhat controversial. Makes several contacts with the 16S rRNA in the 70S ribosome.</text>
</comment>
<comment type="subunit">
    <text evidence="1">Part of the 50S ribosomal subunit. Forms a bridge to the 30S subunit in the 70S ribosome.</text>
</comment>
<comment type="similarity">
    <text evidence="1">Belongs to the universal ribosomal protein uL2 family.</text>
</comment>
<sequence>MAVKGFRPTTPTRREMTMCTFEEITTSTPEKSLLVSLKKSGGRNANGKITVRHIGGGAKRKYRVIDFKRNKDNISAKVVSIEYDPNRTAFIALVVYADGEKRYMIAPVGLKVGDTVVSGPESDIKVGNCLPIRNIPVGTVIHNIELAPGKGAQLVRSAGNSAQLMAKEGDYSQVRLPSGEVRYIRVECRATIGVVSNQTNEIVNIGKAGRKRHMGVRPTVRGSVMNPNDHPHGGGEGRSPIGHPSPRTPWGKPALGYKTRKNKKYSDRFIVKRRHDK</sequence>
<dbReference type="EMBL" id="CP000939">
    <property type="protein sequence ID" value="ACA46714.1"/>
    <property type="molecule type" value="Genomic_DNA"/>
</dbReference>
<dbReference type="RefSeq" id="WP_003399216.1">
    <property type="nucleotide sequence ID" value="NC_010516.1"/>
</dbReference>
<dbReference type="SMR" id="B1IGF1"/>
<dbReference type="KEGG" id="cbb:CLD_1027"/>
<dbReference type="HOGENOM" id="CLU_036235_2_1_9"/>
<dbReference type="Proteomes" id="UP000008541">
    <property type="component" value="Chromosome"/>
</dbReference>
<dbReference type="GO" id="GO:0015934">
    <property type="term" value="C:large ribosomal subunit"/>
    <property type="evidence" value="ECO:0007669"/>
    <property type="project" value="InterPro"/>
</dbReference>
<dbReference type="GO" id="GO:0019843">
    <property type="term" value="F:rRNA binding"/>
    <property type="evidence" value="ECO:0007669"/>
    <property type="project" value="UniProtKB-UniRule"/>
</dbReference>
<dbReference type="GO" id="GO:0003735">
    <property type="term" value="F:structural constituent of ribosome"/>
    <property type="evidence" value="ECO:0007669"/>
    <property type="project" value="InterPro"/>
</dbReference>
<dbReference type="GO" id="GO:0016740">
    <property type="term" value="F:transferase activity"/>
    <property type="evidence" value="ECO:0007669"/>
    <property type="project" value="InterPro"/>
</dbReference>
<dbReference type="GO" id="GO:0002181">
    <property type="term" value="P:cytoplasmic translation"/>
    <property type="evidence" value="ECO:0007669"/>
    <property type="project" value="TreeGrafter"/>
</dbReference>
<dbReference type="FunFam" id="2.30.30.30:FF:000001">
    <property type="entry name" value="50S ribosomal protein L2"/>
    <property type="match status" value="1"/>
</dbReference>
<dbReference type="FunFam" id="2.40.50.140:FF:000003">
    <property type="entry name" value="50S ribosomal protein L2"/>
    <property type="match status" value="1"/>
</dbReference>
<dbReference type="FunFam" id="4.10.950.10:FF:000001">
    <property type="entry name" value="50S ribosomal protein L2"/>
    <property type="match status" value="1"/>
</dbReference>
<dbReference type="Gene3D" id="2.30.30.30">
    <property type="match status" value="1"/>
</dbReference>
<dbReference type="Gene3D" id="2.40.50.140">
    <property type="entry name" value="Nucleic acid-binding proteins"/>
    <property type="match status" value="1"/>
</dbReference>
<dbReference type="Gene3D" id="4.10.950.10">
    <property type="entry name" value="Ribosomal protein L2, domain 3"/>
    <property type="match status" value="1"/>
</dbReference>
<dbReference type="HAMAP" id="MF_01320_B">
    <property type="entry name" value="Ribosomal_uL2_B"/>
    <property type="match status" value="1"/>
</dbReference>
<dbReference type="InterPro" id="IPR012340">
    <property type="entry name" value="NA-bd_OB-fold"/>
</dbReference>
<dbReference type="InterPro" id="IPR014722">
    <property type="entry name" value="Rib_uL2_dom2"/>
</dbReference>
<dbReference type="InterPro" id="IPR002171">
    <property type="entry name" value="Ribosomal_uL2"/>
</dbReference>
<dbReference type="InterPro" id="IPR005880">
    <property type="entry name" value="Ribosomal_uL2_bac/org-type"/>
</dbReference>
<dbReference type="InterPro" id="IPR022669">
    <property type="entry name" value="Ribosomal_uL2_C"/>
</dbReference>
<dbReference type="InterPro" id="IPR022671">
    <property type="entry name" value="Ribosomal_uL2_CS"/>
</dbReference>
<dbReference type="InterPro" id="IPR014726">
    <property type="entry name" value="Ribosomal_uL2_dom3"/>
</dbReference>
<dbReference type="InterPro" id="IPR022666">
    <property type="entry name" value="Ribosomal_uL2_RNA-bd_dom"/>
</dbReference>
<dbReference type="InterPro" id="IPR008991">
    <property type="entry name" value="Translation_prot_SH3-like_sf"/>
</dbReference>
<dbReference type="NCBIfam" id="TIGR01171">
    <property type="entry name" value="rplB_bact"/>
    <property type="match status" value="1"/>
</dbReference>
<dbReference type="PANTHER" id="PTHR13691:SF5">
    <property type="entry name" value="LARGE RIBOSOMAL SUBUNIT PROTEIN UL2M"/>
    <property type="match status" value="1"/>
</dbReference>
<dbReference type="PANTHER" id="PTHR13691">
    <property type="entry name" value="RIBOSOMAL PROTEIN L2"/>
    <property type="match status" value="1"/>
</dbReference>
<dbReference type="Pfam" id="PF00181">
    <property type="entry name" value="Ribosomal_L2"/>
    <property type="match status" value="1"/>
</dbReference>
<dbReference type="Pfam" id="PF03947">
    <property type="entry name" value="Ribosomal_L2_C"/>
    <property type="match status" value="1"/>
</dbReference>
<dbReference type="PIRSF" id="PIRSF002158">
    <property type="entry name" value="Ribosomal_L2"/>
    <property type="match status" value="1"/>
</dbReference>
<dbReference type="SMART" id="SM01383">
    <property type="entry name" value="Ribosomal_L2"/>
    <property type="match status" value="1"/>
</dbReference>
<dbReference type="SMART" id="SM01382">
    <property type="entry name" value="Ribosomal_L2_C"/>
    <property type="match status" value="1"/>
</dbReference>
<dbReference type="SUPFAM" id="SSF50249">
    <property type="entry name" value="Nucleic acid-binding proteins"/>
    <property type="match status" value="1"/>
</dbReference>
<dbReference type="SUPFAM" id="SSF50104">
    <property type="entry name" value="Translation proteins SH3-like domain"/>
    <property type="match status" value="1"/>
</dbReference>
<dbReference type="PROSITE" id="PS00467">
    <property type="entry name" value="RIBOSOMAL_L2"/>
    <property type="match status" value="1"/>
</dbReference>
<reference key="1">
    <citation type="journal article" date="2007" name="PLoS ONE">
        <title>Analysis of the neurotoxin complex genes in Clostridium botulinum A1-A4 and B1 strains: BoNT/A3, /Ba4 and /B1 clusters are located within plasmids.</title>
        <authorList>
            <person name="Smith T.J."/>
            <person name="Hill K.K."/>
            <person name="Foley B.T."/>
            <person name="Detter J.C."/>
            <person name="Munk A.C."/>
            <person name="Bruce D.C."/>
            <person name="Doggett N.A."/>
            <person name="Smith L.A."/>
            <person name="Marks J.D."/>
            <person name="Xie G."/>
            <person name="Brettin T.S."/>
        </authorList>
    </citation>
    <scope>NUCLEOTIDE SEQUENCE [LARGE SCALE GENOMIC DNA]</scope>
    <source>
        <strain>Okra / Type B1</strain>
    </source>
</reference>
<proteinExistence type="inferred from homology"/>
<accession>B1IGF1</accession>